<gene>
    <name evidence="4" type="primary">afp18</name>
    <name evidence="7" type="ORF">DJ39_2720</name>
    <name evidence="6" type="ORF">yruck0001_1570</name>
</gene>
<dbReference type="EC" id="2.4.1.-" evidence="3"/>
<dbReference type="EMBL" id="ACCC01000029">
    <property type="protein sequence ID" value="EEP98478.1"/>
    <property type="molecule type" value="Genomic_DNA"/>
</dbReference>
<dbReference type="EMBL" id="KN150747">
    <property type="protein sequence ID" value="KGA43845.1"/>
    <property type="molecule type" value="Genomic_DNA"/>
</dbReference>
<dbReference type="RefSeq" id="WP_004721406.1">
    <property type="nucleotide sequence ID" value="NZ_ACCC01000029.1"/>
</dbReference>
<dbReference type="SMR" id="C4ULG3"/>
<dbReference type="GeneID" id="66880871"/>
<dbReference type="PATRIC" id="fig|527005.28.peg.674"/>
<dbReference type="HOGENOM" id="CLU_232095_0_0_6"/>
<dbReference type="GO" id="GO:0005576">
    <property type="term" value="C:extracellular region"/>
    <property type="evidence" value="ECO:0007669"/>
    <property type="project" value="UniProtKB-SubCell"/>
</dbReference>
<dbReference type="GO" id="GO:0020002">
    <property type="term" value="C:host cell plasma membrane"/>
    <property type="evidence" value="ECO:0007669"/>
    <property type="project" value="UniProtKB-SubCell"/>
</dbReference>
<dbReference type="GO" id="GO:0016020">
    <property type="term" value="C:membrane"/>
    <property type="evidence" value="ECO:0007669"/>
    <property type="project" value="UniProtKB-KW"/>
</dbReference>
<dbReference type="GO" id="GO:0000030">
    <property type="term" value="F:mannosyltransferase activity"/>
    <property type="evidence" value="ECO:0007669"/>
    <property type="project" value="TreeGrafter"/>
</dbReference>
<dbReference type="GO" id="GO:0046872">
    <property type="term" value="F:metal ion binding"/>
    <property type="evidence" value="ECO:0007669"/>
    <property type="project" value="UniProtKB-KW"/>
</dbReference>
<dbReference type="GO" id="GO:0016262">
    <property type="term" value="F:protein N-acetylglucosaminyltransferase activity"/>
    <property type="evidence" value="ECO:0000314"/>
    <property type="project" value="UniProtKB"/>
</dbReference>
<dbReference type="GO" id="GO:0090729">
    <property type="term" value="F:toxin activity"/>
    <property type="evidence" value="ECO:0000315"/>
    <property type="project" value="UniProtKB"/>
</dbReference>
<dbReference type="GO" id="GO:0051999">
    <property type="term" value="P:mannosyl-inositol phosphorylceramide biosynthetic process"/>
    <property type="evidence" value="ECO:0007669"/>
    <property type="project" value="TreeGrafter"/>
</dbReference>
<dbReference type="GO" id="GO:0045992">
    <property type="term" value="P:negative regulation of embryonic development"/>
    <property type="evidence" value="ECO:0000315"/>
    <property type="project" value="UniProtKB"/>
</dbReference>
<dbReference type="GO" id="GO:0044083">
    <property type="term" value="P:symbiont-mediated perturbation of host Rho small GTPase signal transduction"/>
    <property type="evidence" value="ECO:0000314"/>
    <property type="project" value="UniProtKB"/>
</dbReference>
<dbReference type="CDD" id="cd20495">
    <property type="entry name" value="C58_PaToxP-like"/>
    <property type="match status" value="1"/>
</dbReference>
<dbReference type="CDD" id="cd20749">
    <property type="entry name" value="nigritoxin_M"/>
    <property type="match status" value="1"/>
</dbReference>
<dbReference type="FunFam" id="3.90.550.20:FF:000021">
    <property type="entry name" value="Toxin Afp18"/>
    <property type="match status" value="1"/>
</dbReference>
<dbReference type="Gene3D" id="3.90.550.20">
    <property type="match status" value="1"/>
</dbReference>
<dbReference type="InterPro" id="IPR051706">
    <property type="entry name" value="Glycosyltransferase_domain"/>
</dbReference>
<dbReference type="InterPro" id="IPR007577">
    <property type="entry name" value="GlycoTrfase_DXD_sugar-bd_CS"/>
</dbReference>
<dbReference type="InterPro" id="IPR029044">
    <property type="entry name" value="Nucleotide-diphossugar_trans"/>
</dbReference>
<dbReference type="PANTHER" id="PTHR32385:SF15">
    <property type="entry name" value="INOSITOL PHOSPHOCERAMIDE MANNOSYLTRANSFERASE 1"/>
    <property type="match status" value="1"/>
</dbReference>
<dbReference type="PANTHER" id="PTHR32385">
    <property type="entry name" value="MANNOSYL PHOSPHORYLINOSITOL CERAMIDE SYNTHASE"/>
    <property type="match status" value="1"/>
</dbReference>
<dbReference type="Pfam" id="PF04488">
    <property type="entry name" value="Gly_transf_sug"/>
    <property type="match status" value="1"/>
</dbReference>
<dbReference type="SUPFAM" id="SSF53448">
    <property type="entry name" value="Nucleotide-diphospho-sugar transferases"/>
    <property type="match status" value="1"/>
</dbReference>
<name>AFP18_YERRA</name>
<reference key="1">
    <citation type="submission" date="2008-12" db="EMBL/GenBank/DDBJ databases">
        <title>Annotation of the Yersinia ruckeri ATCC 29473 genome.</title>
        <authorList>
            <person name="Read T.D."/>
            <person name="Akmal A."/>
            <person name="Bishop-Lilly K."/>
            <person name="Chen P.E."/>
            <person name="Cook C."/>
            <person name="Kiley M.P."/>
            <person name="Lentz S."/>
            <person name="Mateczun A."/>
            <person name="Nagarajan N."/>
            <person name="Nolan N."/>
            <person name="Osborne B.I."/>
            <person name="Pop M."/>
            <person name="Sozhamannan S."/>
            <person name="Stewart A.C."/>
            <person name="Sulakvelidze A."/>
            <person name="Thomason B."/>
            <person name="Willner K."/>
            <person name="Zwick M.E."/>
        </authorList>
    </citation>
    <scope>NUCLEOTIDE SEQUENCE [LARGE SCALE GENOMIC DNA]</scope>
    <source>
        <strain>ATCC 29473 / DSM 18506 / JCM 15110 / CCUG 14190 / NCIMB 2194 / NCTC 12986 / 2396-61</strain>
    </source>
</reference>
<reference key="2">
    <citation type="submission" date="2014-07" db="EMBL/GenBank/DDBJ databases">
        <authorList>
            <person name="Bishop-Lilly K.A."/>
            <person name="Broomall S.M."/>
            <person name="Chain P.S."/>
            <person name="Chertkov O."/>
            <person name="Coyne S.R."/>
            <person name="Daligault H.E."/>
            <person name="Davenport K.W."/>
            <person name="Erkkila T."/>
            <person name="Frey K.G."/>
            <person name="Gibbons H.S."/>
            <person name="Gu W."/>
            <person name="Jaissle J."/>
            <person name="Johnson S.L."/>
            <person name="Koroleva G.I."/>
            <person name="Ladner J.T."/>
            <person name="Lo C.-C."/>
            <person name="Minogue T.D."/>
            <person name="Munk C."/>
            <person name="Palacios G.F."/>
            <person name="Redden C.L."/>
            <person name="Rosenzweig C.N."/>
            <person name="Scholz M.B."/>
            <person name="Teshima H."/>
            <person name="Xu Y."/>
        </authorList>
    </citation>
    <scope>NUCLEOTIDE SEQUENCE [LARGE SCALE GENOMIC DNA]</scope>
    <source>
        <strain>ATCC 29473 / DSM 18506 / JCM 15110 / CCUG 14190 / NCIMB 2194 / NCTC 12986 / 2396-61</strain>
    </source>
</reference>
<reference key="3">
    <citation type="journal article" date="2015" name="Nat. Commun.">
        <title>Tyrosine glycosylation of Rho by Yersinia toxin impairs blastomere cell behaviour in zebrafish embryos.</title>
        <authorList>
            <person name="Jank T."/>
            <person name="Eckerle S."/>
            <person name="Steinemann M."/>
            <person name="Trillhaase C."/>
            <person name="Schimpl M."/>
            <person name="Wiese S."/>
            <person name="van Aalten D.M."/>
            <person name="Driever W."/>
            <person name="Aktories K."/>
        </authorList>
    </citation>
    <scope>FUNCTION</scope>
    <scope>CATALYTIC ACTIVITY</scope>
    <scope>SUBSTRATE SPECIFICITY</scope>
    <scope>SUBCELLULAR LOCATION</scope>
    <scope>DOMAIN</scope>
    <scope>MUTAGENESIS OF 1957-ASP--ASP-1959</scope>
    <source>
        <strain>ATCC 29473 / DSM 18506 / JCM 15110 / CCUG 14190 / NCIMB 2194 / NCTC 12986 / 2396-61</strain>
    </source>
</reference>
<sequence length="2123" mass="237975">MPYFNKSKKNEIRPEKSKEEVGGVLFDDSAIHENIDHNMEPQTGDSVATFPDNSDEVVGGDLAALRARLQATIGDYLPEFYEFQQTGRNILYPKPVDIKALQARLNSMPITAWIQPLQQQLEQAGNAFLDRFRLFRKEKDWHNNALEFVKFRLAVKETGWDEQQTRDYNEALKHANRLSGYLSGTLDLIQHLNDNPERQTSWEAVRKTSYDMLLNELLPVDAENNGNQYTAKIRGNLTKNHPDNIKFNTIVNSVTRDERMASEALSAETKGLSARLLSGIALTRNSAEKIDKKSETSGITRDIVALCQVLQGVIKTIKRRGEYIQPLTDWQPSEHKLPGQKEELTKAETVKRELVKSRKVMMQKVQGAKTILGVLSDKTNKNRHRITQTLPYSANPDTNTVSRKTNEAVFRAGIMLLDKIQQTTSGIHKASLASRPLQHAVTQYSALEQMSSGMPSNRILDAKLRSESGRWQEKAEKSKKQLQHILREITALAEEHLKHKFMSALRDELKRAPETLASNNIISNFDTRAKIVVEGLASIEIGMNQSVVRLAGHGEAGRKDLDEQVVAWLQRLERIKGELKTDITQATGQSINNFSRQGMLARRMGEWNEAEKQRYLAALSTEDRAVAEMQYNTLFFEVIQHYLPLLSKETDPQGERLLQRLRLEVSNAAEGTTVYPATMAEILAGMKSTEQAIRDWSGRKLLRVVFLAACLEGVKLMPKLAALPLRVAIKFVITGAKVAWATHKGQQGIRGGEGDVDDEIGEYAKRSFKTASVKVVLSLPPGLATMLGVASIALDVYEGGLKGAGGKIAKNIVGDAPWRALNQGSKIAAEAYTTASMNAALKEGGANPVSHSSTLQQQMDAKPFFDNSDQDADQPRVRRKREMTDEIMLSDGSSRSEAKALPDENELDTDQSKSRPESALAVETLQSEHFDFDRGIRYQDFSDEQKKQTYLHGIKFVLLQIENDGHFAQNIRNNAYLARIGAKLAVPVDIYRYKLNNTFLLPDEIDSKSGVLIRLDSEIPYYYVSEGKDLLENIAWAMPYNAANRGPLKFSLDPGEVTSSHSGVDILNNIRSERFKFETYFNYNAPEAMSIESLSAQLANTIEADYKFKNTSPTNKILISRAIVGAHIPDPGVRATQGEYHIEFDSDELAPAKYLRSFARPFSTLSGEMQLISSSIKGETIQETELHVHQAEYIGSWVDATAGAIISFTPEGWFLNTAQSAAEITADLTEGKDPDPLAVAGLLVGIIPGGKIAAKVGKFTRIGGKTVKYGLILGNKSVDLAIVGKSIKTAVDTGEPLAIYQAFLASGMSVKNSYDIAKNMSSELKISKKIEESARLRKLKALQKNTYKYSMNSKMPVRKFRVGQTDLLGKIHKGEIKISRNNGTTWEKGNQLHLLAYRLQNAGGGRLLPDVFRDKIVIGEYSFKRVKYNQKKLNEMMRIAKMYTPTSNSTERIAKLQQNYKTGKEMSHAPQYDTYNDLSLGEKLDLFINSNTDATTRGVLAGKINESITNINLYETAKGVDAWKTSANKATDVVLAPQNIFLKGRAGECLPESILMGWALQSGQDTKLAKKLMNIHSSSNIAANPLYKSLVELHSDGNASRFGESVISDINMKMLSGAESKLFPTENSSVRVDIPEHTMLISKVNKDGKIKYVFYDPNYGMAYFNKYKEMISFFKKKIKGYDTPKRSTSFRQLDYSHLSDIKIKGKNLNEIIDGEIPQIFRQEDVNLEGITPQDGIYRMLGTHQQENNTYIKSQNNIYQVEWDQTTNTWRVFDSANTNRSRITVPIKRDTDGEWFKYTETGLKGGGLFDEIKNNWLQRKRFKNLQDFNDIVDFEENKWPSEPINKDIHMIWVGTRNISEKNIGLSLETARKNSDYNTTIIYDSGIAGYESAKDFMTEKFKDSKVTLVDFRKKSYFHQLQQEPSFPYYEQAIRDKKYAQASDILRLLVLKYEGGIYKDIDDVQVKAFGSLAFPKGIGVMREYAPEAGKTTAFPNTPIAATKNNPVVNKTLELAVENYHRGETNVLKLAGPDVFTESLYQEIPGMRPQVLGAQLDQFELAKRQALGMRLEKPKGFADEKLTLQEKAKIRQPYEAIRGLSGYVDNGADHSWVTDMPGNSTQSSGLS</sequence>
<evidence type="ECO:0000250" key="1">
    <source>
        <dbReference type="UniProtKB" id="C7BKP9"/>
    </source>
</evidence>
<evidence type="ECO:0000256" key="2">
    <source>
        <dbReference type="SAM" id="MobiDB-lite"/>
    </source>
</evidence>
<evidence type="ECO:0000269" key="3">
    <source>
    </source>
</evidence>
<evidence type="ECO:0000303" key="4">
    <source>
    </source>
</evidence>
<evidence type="ECO:0000305" key="5">
    <source>
    </source>
</evidence>
<evidence type="ECO:0000312" key="6">
    <source>
        <dbReference type="EMBL" id="EEP98478.1"/>
    </source>
</evidence>
<evidence type="ECO:0000312" key="7">
    <source>
        <dbReference type="EMBL" id="KGA43845.1"/>
    </source>
</evidence>
<accession>C4ULG3</accession>
<protein>
    <recommendedName>
        <fullName evidence="4">Toxin Afp18</fullName>
    </recommendedName>
    <alternativeName>
        <fullName evidence="4">Antifeeding prophage 18</fullName>
    </alternativeName>
    <alternativeName>
        <fullName evidence="4">Antifeeding protein 18</fullName>
    </alternativeName>
    <domain>
        <recommendedName>
            <fullName evidence="5">Protein N-acetylglucosaminyltransferase</fullName>
            <shortName evidence="5">Protein O-GlcNAc transferase</shortName>
            <ecNumber evidence="3">2.4.1.-</ecNumber>
        </recommendedName>
        <alternativeName>
            <fullName evidence="4">Tyrosine glycosyltransferase</fullName>
        </alternativeName>
    </domain>
</protein>
<keyword id="KW-0328">Glycosyltransferase</keyword>
<keyword id="KW-1032">Host cell membrane</keyword>
<keyword id="KW-1043">Host membrane</keyword>
<keyword id="KW-0472">Membrane</keyword>
<keyword id="KW-0479">Metal-binding</keyword>
<keyword id="KW-0964">Secreted</keyword>
<keyword id="KW-0800">Toxin</keyword>
<keyword id="KW-0808">Transferase</keyword>
<keyword id="KW-0843">Virulence</keyword>
<organism>
    <name type="scientific">Yersinia ruckeri serotype O1 (strain ATCC 29473 / DSM 18506 / JCM 15110 / CCUG 14190 / NCIMB 2194 / NCTC 12986 / 2396-61)</name>
    <dbReference type="NCBI Taxonomy" id="527005"/>
    <lineage>
        <taxon>Bacteria</taxon>
        <taxon>Pseudomonadati</taxon>
        <taxon>Pseudomonadota</taxon>
        <taxon>Gammaproteobacteria</taxon>
        <taxon>Enterobacterales</taxon>
        <taxon>Yersiniaceae</taxon>
        <taxon>Yersinia</taxon>
    </lineage>
</organism>
<feature type="chain" id="PRO_0000434567" description="Toxin Afp18">
    <location>
        <begin position="1"/>
        <end position="2123"/>
    </location>
</feature>
<feature type="region of interest" description="Disordered" evidence="2">
    <location>
        <begin position="864"/>
        <end position="919"/>
    </location>
</feature>
<feature type="region of interest" description="Tyrosine glycosyltransferase" evidence="5">
    <location>
        <begin position="1771"/>
        <end position="2123"/>
    </location>
</feature>
<feature type="short sequence motif" description="DxDD motif" evidence="5">
    <location>
        <begin position="1957"/>
        <end position="1960"/>
    </location>
</feature>
<feature type="binding site" evidence="1">
    <location>
        <begin position="1850"/>
        <end position="1852"/>
    </location>
    <ligand>
        <name>UDP-N-acetyl-alpha-D-glucosamine</name>
        <dbReference type="ChEBI" id="CHEBI:57705"/>
    </ligand>
</feature>
<feature type="binding site" evidence="1">
    <location>
        <begin position="1940"/>
        <end position="1941"/>
    </location>
    <ligand>
        <name>UDP-N-acetyl-alpha-D-glucosamine</name>
        <dbReference type="ChEBI" id="CHEBI:57705"/>
    </ligand>
</feature>
<feature type="binding site" evidence="1">
    <location>
        <position position="1957"/>
    </location>
    <ligand>
        <name>a divalent metal cation</name>
        <dbReference type="ChEBI" id="CHEBI:60240"/>
    </ligand>
</feature>
<feature type="binding site" evidence="1">
    <location>
        <position position="1959"/>
    </location>
    <ligand>
        <name>a divalent metal cation</name>
        <dbReference type="ChEBI" id="CHEBI:60240"/>
    </ligand>
</feature>
<feature type="binding site" evidence="1">
    <location>
        <position position="1993"/>
    </location>
    <ligand>
        <name>UDP-N-acetyl-alpha-D-glucosamine</name>
        <dbReference type="ChEBI" id="CHEBI:57705"/>
    </ligand>
</feature>
<feature type="mutagenesis site" description="Loss of glycosyltransferase activity. Loss of the ability to abrogate zebrafish embryo development. Loss of effect on actin skeleton and on cytokinesis." evidence="3">
    <original>DID</original>
    <variation>NIN</variation>
    <location>
        <begin position="1957"/>
        <end position="1959"/>
    </location>
</feature>
<comment type="function">
    <text evidence="3">Toxin component of the prophage tail-derived protein translocation system Afp, which is the causative agent of enteric redmouth disease in salmonid fish species. Mono-O-GlcNAcylates the small GTPase RhoA in eukaryotic host cells at Tyr-34, using UDP-N-acetylglucosamine (UDP-GlcNAc) as the sugar donor. Glycosylation of RhoA results in impaired effector and regulator interaction and inactivation of downstream RhoA signaling which leads to actin filament depolymerization and blocks cytokinesis and gastrulation during zebrafish embryo development. To a lesser extent, is also able to glycosylate other Rho family GTPases (RhoB, RhoC, Rac1, Rac2, Rac3, and Cdc42) in vitro at a switch I tyrosine residue, but not Ras proteins.</text>
</comment>
<comment type="catalytic activity">
    <reaction evidence="3">
        <text>L-tyrosyl-[protein] + UDP-N-acetyl-alpha-D-glucosamine = O-(N-acetyl-alpha-D-glucosaminyl)-L-tyrosyl-[protein] + UDP + H(+)</text>
        <dbReference type="Rhea" id="RHEA:51536"/>
        <dbReference type="Rhea" id="RHEA-COMP:10136"/>
        <dbReference type="Rhea" id="RHEA-COMP:13016"/>
        <dbReference type="ChEBI" id="CHEBI:15378"/>
        <dbReference type="ChEBI" id="CHEBI:46858"/>
        <dbReference type="ChEBI" id="CHEBI:57705"/>
        <dbReference type="ChEBI" id="CHEBI:58223"/>
        <dbReference type="ChEBI" id="CHEBI:134208"/>
    </reaction>
</comment>
<comment type="cofactor">
    <cofactor evidence="1">
        <name>a divalent metal cation</name>
        <dbReference type="ChEBI" id="CHEBI:60240"/>
    </cofactor>
</comment>
<comment type="subcellular location">
    <subcellularLocation>
        <location evidence="5">Secreted</location>
    </subcellularLocation>
    <subcellularLocation>
        <location evidence="3">Host cell membrane</location>
    </subcellularLocation>
    <text evidence="3">Is likely secreted by the antifeeding prophage tail (Afp) protein translocation system into eukaryotic host cell. Targets the host cell membrane, and shows co-localization with RhoA.</text>
</comment>
<comment type="domain">
    <text evidence="3">The glycosyltransferase domain is the Afp18 protein domain mediating toxicity.</text>
</comment>
<proteinExistence type="evidence at protein level"/>